<keyword id="KW-0963">Cytoplasm</keyword>
<keyword id="KW-0489">Methyltransferase</keyword>
<keyword id="KW-1185">Reference proteome</keyword>
<keyword id="KW-0694">RNA-binding</keyword>
<keyword id="KW-0698">rRNA processing</keyword>
<keyword id="KW-0949">S-adenosyl-L-methionine</keyword>
<keyword id="KW-0808">Transferase</keyword>
<reference key="1">
    <citation type="journal article" date="1996" name="Science">
        <title>Complete genome sequence of the methanogenic archaeon, Methanococcus jannaschii.</title>
        <authorList>
            <person name="Bult C.J."/>
            <person name="White O."/>
            <person name="Olsen G.J."/>
            <person name="Zhou L."/>
            <person name="Fleischmann R.D."/>
            <person name="Sutton G.G."/>
            <person name="Blake J.A."/>
            <person name="FitzGerald L.M."/>
            <person name="Clayton R.A."/>
            <person name="Gocayne J.D."/>
            <person name="Kerlavage A.R."/>
            <person name="Dougherty B.A."/>
            <person name="Tomb J.-F."/>
            <person name="Adams M.D."/>
            <person name="Reich C.I."/>
            <person name="Overbeek R."/>
            <person name="Kirkness E.F."/>
            <person name="Weinstock K.G."/>
            <person name="Merrick J.M."/>
            <person name="Glodek A."/>
            <person name="Scott J.L."/>
            <person name="Geoghagen N.S.M."/>
            <person name="Weidman J.F."/>
            <person name="Fuhrmann J.L."/>
            <person name="Nguyen D."/>
            <person name="Utterback T.R."/>
            <person name="Kelley J.M."/>
            <person name="Peterson J.D."/>
            <person name="Sadow P.W."/>
            <person name="Hanna M.C."/>
            <person name="Cotton M.D."/>
            <person name="Roberts K.M."/>
            <person name="Hurst M.A."/>
            <person name="Kaine B.P."/>
            <person name="Borodovsky M."/>
            <person name="Klenk H.-P."/>
            <person name="Fraser C.M."/>
            <person name="Smith H.O."/>
            <person name="Woese C.R."/>
            <person name="Venter J.C."/>
        </authorList>
    </citation>
    <scope>NUCLEOTIDE SEQUENCE [LARGE SCALE GENOMIC DNA]</scope>
    <source>
        <strain>ATCC 43067 / DSM 2661 / JAL-1 / JCM 10045 / NBRC 100440</strain>
    </source>
</reference>
<organism>
    <name type="scientific">Methanocaldococcus jannaschii (strain ATCC 43067 / DSM 2661 / JAL-1 / JCM 10045 / NBRC 100440)</name>
    <name type="common">Methanococcus jannaschii</name>
    <dbReference type="NCBI Taxonomy" id="243232"/>
    <lineage>
        <taxon>Archaea</taxon>
        <taxon>Methanobacteriati</taxon>
        <taxon>Methanobacteriota</taxon>
        <taxon>Methanomada group</taxon>
        <taxon>Methanococci</taxon>
        <taxon>Methanococcales</taxon>
        <taxon>Methanocaldococcaceae</taxon>
        <taxon>Methanocaldococcus</taxon>
    </lineage>
</organism>
<feature type="chain" id="PRO_0000213171" description="Putative ribosomal RNA large subunit methyltransferase MJ1653">
    <location>
        <begin position="1"/>
        <end position="385"/>
    </location>
</feature>
<feature type="domain" description="PUA" evidence="1">
    <location>
        <begin position="2"/>
        <end position="81"/>
    </location>
</feature>
<gene>
    <name type="ordered locus">MJ1653</name>
</gene>
<sequence>MTTKLYVDFGGYSAIEKGNLIIPRDNILNKEDFDSIEIGEVVDIYSKRGKFLGRGFKNPKEVRIMTLRKEDLDENYIREKIIKANEYRLKLGFKDTYRMVYTQSDWLNGLVIDKYNDIATVQIFNYGIEKMKDVVVETLLDLGIDSIYEKSSGRNRKRAGLPEVEGILAGEKTETIIQEGEAKFKVTFDGQKTGFFLDQRENRLELEKFIKEGDRVLDICCYTGGFSVHAAIRGAEVVGVDLSKKALKLAEENMELNNIPKDRYEFIEGNAFKVMEEFIEDGEKFDVVILDPPAFAQSKKALKSAIKGYHMLNRFGAKLADRLLVTCSCSQPLEPDAFKALVIDACLKAKKWAKIIKYGSQSPDHPITSKGTEYLKCLFLSVEEI</sequence>
<evidence type="ECO:0000255" key="1">
    <source>
        <dbReference type="PROSITE-ProRule" id="PRU00161"/>
    </source>
</evidence>
<evidence type="ECO:0000305" key="2"/>
<protein>
    <recommendedName>
        <fullName>Putative ribosomal RNA large subunit methyltransferase MJ1653</fullName>
        <ecNumber>2.1.1.-</ecNumber>
    </recommendedName>
</protein>
<accession>Q59047</accession>
<comment type="subcellular location">
    <subcellularLocation>
        <location evidence="2">Cytoplasm</location>
    </subcellularLocation>
</comment>
<comment type="similarity">
    <text evidence="2">Belongs to the methyltransferase superfamily. RlmI family.</text>
</comment>
<proteinExistence type="inferred from homology"/>
<name>Y1653_METJA</name>
<dbReference type="EC" id="2.1.1.-"/>
<dbReference type="EMBL" id="L77117">
    <property type="protein sequence ID" value="AAB99674.1"/>
    <property type="molecule type" value="Genomic_DNA"/>
</dbReference>
<dbReference type="PIR" id="C64506">
    <property type="entry name" value="C64506"/>
</dbReference>
<dbReference type="RefSeq" id="WP_010871177.1">
    <property type="nucleotide sequence ID" value="NC_000909.1"/>
</dbReference>
<dbReference type="SMR" id="Q59047"/>
<dbReference type="FunCoup" id="Q59047">
    <property type="interactions" value="35"/>
</dbReference>
<dbReference type="STRING" id="243232.MJ_1653"/>
<dbReference type="PaxDb" id="243232-MJ_1653"/>
<dbReference type="EnsemblBacteria" id="AAB99674">
    <property type="protein sequence ID" value="AAB99674"/>
    <property type="gene ID" value="MJ_1653"/>
</dbReference>
<dbReference type="GeneID" id="1452562"/>
<dbReference type="KEGG" id="mja:MJ_1653"/>
<dbReference type="eggNOG" id="arCOG00032">
    <property type="taxonomic scope" value="Archaea"/>
</dbReference>
<dbReference type="HOGENOM" id="CLU_014042_0_0_2"/>
<dbReference type="InParanoid" id="Q59047"/>
<dbReference type="OrthoDB" id="190449at2157"/>
<dbReference type="PhylomeDB" id="Q59047"/>
<dbReference type="Proteomes" id="UP000000805">
    <property type="component" value="Chromosome"/>
</dbReference>
<dbReference type="GO" id="GO:0005737">
    <property type="term" value="C:cytoplasm"/>
    <property type="evidence" value="ECO:0007669"/>
    <property type="project" value="UniProtKB-SubCell"/>
</dbReference>
<dbReference type="GO" id="GO:0008168">
    <property type="term" value="F:methyltransferase activity"/>
    <property type="evidence" value="ECO:0007669"/>
    <property type="project" value="UniProtKB-KW"/>
</dbReference>
<dbReference type="GO" id="GO:0003723">
    <property type="term" value="F:RNA binding"/>
    <property type="evidence" value="ECO:0007669"/>
    <property type="project" value="UniProtKB-KW"/>
</dbReference>
<dbReference type="GO" id="GO:0032259">
    <property type="term" value="P:methylation"/>
    <property type="evidence" value="ECO:0007669"/>
    <property type="project" value="UniProtKB-KW"/>
</dbReference>
<dbReference type="GO" id="GO:0006364">
    <property type="term" value="P:rRNA processing"/>
    <property type="evidence" value="ECO:0007669"/>
    <property type="project" value="UniProtKB-KW"/>
</dbReference>
<dbReference type="CDD" id="cd02440">
    <property type="entry name" value="AdoMet_MTases"/>
    <property type="match status" value="1"/>
</dbReference>
<dbReference type="CDD" id="cd21153">
    <property type="entry name" value="PUA_RlmI"/>
    <property type="match status" value="1"/>
</dbReference>
<dbReference type="CDD" id="cd11572">
    <property type="entry name" value="RlmI_M_like"/>
    <property type="match status" value="1"/>
</dbReference>
<dbReference type="Gene3D" id="2.30.130.10">
    <property type="entry name" value="PUA domain"/>
    <property type="match status" value="1"/>
</dbReference>
<dbReference type="Gene3D" id="3.30.750.80">
    <property type="entry name" value="RNA methyltransferase domain (HRMD) like"/>
    <property type="match status" value="1"/>
</dbReference>
<dbReference type="Gene3D" id="3.40.50.150">
    <property type="entry name" value="Vaccinia Virus protein VP39"/>
    <property type="match status" value="1"/>
</dbReference>
<dbReference type="InterPro" id="IPR002478">
    <property type="entry name" value="PUA"/>
</dbReference>
<dbReference type="InterPro" id="IPR015947">
    <property type="entry name" value="PUA-like_sf"/>
</dbReference>
<dbReference type="InterPro" id="IPR036974">
    <property type="entry name" value="PUA_sf"/>
</dbReference>
<dbReference type="InterPro" id="IPR041532">
    <property type="entry name" value="RlmI-like_PUA"/>
</dbReference>
<dbReference type="InterPro" id="IPR019614">
    <property type="entry name" value="SAM-dep_methyl-trfase"/>
</dbReference>
<dbReference type="InterPro" id="IPR029063">
    <property type="entry name" value="SAM-dependent_MTases_sf"/>
</dbReference>
<dbReference type="PANTHER" id="PTHR42873">
    <property type="entry name" value="RIBOSOMAL RNA LARGE SUBUNIT METHYLTRANSFERASE"/>
    <property type="match status" value="1"/>
</dbReference>
<dbReference type="PANTHER" id="PTHR42873:SF1">
    <property type="entry name" value="S-ADENOSYLMETHIONINE-DEPENDENT METHYLTRANSFERASE DOMAIN-CONTAINING PROTEIN"/>
    <property type="match status" value="1"/>
</dbReference>
<dbReference type="Pfam" id="PF10672">
    <property type="entry name" value="Methyltrans_SAM"/>
    <property type="match status" value="1"/>
</dbReference>
<dbReference type="Pfam" id="PF17785">
    <property type="entry name" value="PUA_3"/>
    <property type="match status" value="1"/>
</dbReference>
<dbReference type="SMART" id="SM00359">
    <property type="entry name" value="PUA"/>
    <property type="match status" value="1"/>
</dbReference>
<dbReference type="SUPFAM" id="SSF88697">
    <property type="entry name" value="PUA domain-like"/>
    <property type="match status" value="1"/>
</dbReference>
<dbReference type="SUPFAM" id="SSF53335">
    <property type="entry name" value="S-adenosyl-L-methionine-dependent methyltransferases"/>
    <property type="match status" value="1"/>
</dbReference>
<dbReference type="PROSITE" id="PS50890">
    <property type="entry name" value="PUA"/>
    <property type="match status" value="1"/>
</dbReference>